<feature type="chain" id="PRO_1000094721" description="UDP-N-acetylglucosamine 1-carboxyvinyltransferase">
    <location>
        <begin position="1"/>
        <end position="419"/>
    </location>
</feature>
<feature type="active site" description="Proton donor" evidence="1">
    <location>
        <position position="115"/>
    </location>
</feature>
<feature type="binding site" evidence="1">
    <location>
        <begin position="22"/>
        <end position="23"/>
    </location>
    <ligand>
        <name>phosphoenolpyruvate</name>
        <dbReference type="ChEBI" id="CHEBI:58702"/>
    </ligand>
</feature>
<feature type="binding site" evidence="1">
    <location>
        <position position="91"/>
    </location>
    <ligand>
        <name>UDP-N-acetyl-alpha-D-glucosamine</name>
        <dbReference type="ChEBI" id="CHEBI:57705"/>
    </ligand>
</feature>
<feature type="binding site" evidence="1">
    <location>
        <begin position="120"/>
        <end position="124"/>
    </location>
    <ligand>
        <name>UDP-N-acetyl-alpha-D-glucosamine</name>
        <dbReference type="ChEBI" id="CHEBI:57705"/>
    </ligand>
</feature>
<feature type="binding site" evidence="1">
    <location>
        <begin position="160"/>
        <end position="163"/>
    </location>
    <ligand>
        <name>UDP-N-acetyl-alpha-D-glucosamine</name>
        <dbReference type="ChEBI" id="CHEBI:57705"/>
    </ligand>
</feature>
<feature type="binding site" evidence="1">
    <location>
        <position position="305"/>
    </location>
    <ligand>
        <name>UDP-N-acetyl-alpha-D-glucosamine</name>
        <dbReference type="ChEBI" id="CHEBI:57705"/>
    </ligand>
</feature>
<feature type="binding site" evidence="1">
    <location>
        <position position="327"/>
    </location>
    <ligand>
        <name>UDP-N-acetyl-alpha-D-glucosamine</name>
        <dbReference type="ChEBI" id="CHEBI:57705"/>
    </ligand>
</feature>
<feature type="modified residue" description="2-(S-cysteinyl)pyruvic acid O-phosphothioketal" evidence="1">
    <location>
        <position position="115"/>
    </location>
</feature>
<accession>B4T720</accession>
<organism>
    <name type="scientific">Salmonella newport (strain SL254)</name>
    <dbReference type="NCBI Taxonomy" id="423368"/>
    <lineage>
        <taxon>Bacteria</taxon>
        <taxon>Pseudomonadati</taxon>
        <taxon>Pseudomonadota</taxon>
        <taxon>Gammaproteobacteria</taxon>
        <taxon>Enterobacterales</taxon>
        <taxon>Enterobacteriaceae</taxon>
        <taxon>Salmonella</taxon>
    </lineage>
</organism>
<evidence type="ECO:0000255" key="1">
    <source>
        <dbReference type="HAMAP-Rule" id="MF_00111"/>
    </source>
</evidence>
<proteinExistence type="inferred from homology"/>
<dbReference type="EC" id="2.5.1.7" evidence="1"/>
<dbReference type="EMBL" id="CP001113">
    <property type="protein sequence ID" value="ACF65411.1"/>
    <property type="molecule type" value="Genomic_DNA"/>
</dbReference>
<dbReference type="RefSeq" id="WP_000357288.1">
    <property type="nucleotide sequence ID" value="NZ_CCMR01000001.1"/>
</dbReference>
<dbReference type="SMR" id="B4T720"/>
<dbReference type="KEGG" id="see:SNSL254_A3568"/>
<dbReference type="HOGENOM" id="CLU_027387_0_0_6"/>
<dbReference type="UniPathway" id="UPA00219"/>
<dbReference type="Proteomes" id="UP000008824">
    <property type="component" value="Chromosome"/>
</dbReference>
<dbReference type="GO" id="GO:0005737">
    <property type="term" value="C:cytoplasm"/>
    <property type="evidence" value="ECO:0007669"/>
    <property type="project" value="UniProtKB-SubCell"/>
</dbReference>
<dbReference type="GO" id="GO:0008760">
    <property type="term" value="F:UDP-N-acetylglucosamine 1-carboxyvinyltransferase activity"/>
    <property type="evidence" value="ECO:0007669"/>
    <property type="project" value="UniProtKB-UniRule"/>
</dbReference>
<dbReference type="GO" id="GO:0051301">
    <property type="term" value="P:cell division"/>
    <property type="evidence" value="ECO:0007669"/>
    <property type="project" value="UniProtKB-KW"/>
</dbReference>
<dbReference type="GO" id="GO:0071555">
    <property type="term" value="P:cell wall organization"/>
    <property type="evidence" value="ECO:0007669"/>
    <property type="project" value="UniProtKB-KW"/>
</dbReference>
<dbReference type="GO" id="GO:0009252">
    <property type="term" value="P:peptidoglycan biosynthetic process"/>
    <property type="evidence" value="ECO:0007669"/>
    <property type="project" value="UniProtKB-UniRule"/>
</dbReference>
<dbReference type="GO" id="GO:0008360">
    <property type="term" value="P:regulation of cell shape"/>
    <property type="evidence" value="ECO:0007669"/>
    <property type="project" value="UniProtKB-KW"/>
</dbReference>
<dbReference type="GO" id="GO:0019277">
    <property type="term" value="P:UDP-N-acetylgalactosamine biosynthetic process"/>
    <property type="evidence" value="ECO:0007669"/>
    <property type="project" value="InterPro"/>
</dbReference>
<dbReference type="CDD" id="cd01555">
    <property type="entry name" value="UdpNAET"/>
    <property type="match status" value="1"/>
</dbReference>
<dbReference type="FunFam" id="3.65.10.10:FF:000002">
    <property type="entry name" value="UDP-N-acetylglucosamine 1-carboxyvinyltransferase"/>
    <property type="match status" value="1"/>
</dbReference>
<dbReference type="Gene3D" id="3.65.10.10">
    <property type="entry name" value="Enolpyruvate transferase domain"/>
    <property type="match status" value="2"/>
</dbReference>
<dbReference type="HAMAP" id="MF_00111">
    <property type="entry name" value="MurA"/>
    <property type="match status" value="1"/>
</dbReference>
<dbReference type="InterPro" id="IPR001986">
    <property type="entry name" value="Enolpyruvate_Tfrase_dom"/>
</dbReference>
<dbReference type="InterPro" id="IPR036968">
    <property type="entry name" value="Enolpyruvate_Tfrase_sf"/>
</dbReference>
<dbReference type="InterPro" id="IPR050068">
    <property type="entry name" value="MurA_subfamily"/>
</dbReference>
<dbReference type="InterPro" id="IPR013792">
    <property type="entry name" value="RNA3'P_cycl/enolpyr_Trfase_a/b"/>
</dbReference>
<dbReference type="InterPro" id="IPR005750">
    <property type="entry name" value="UDP_GlcNAc_COvinyl_MurA"/>
</dbReference>
<dbReference type="NCBIfam" id="TIGR01072">
    <property type="entry name" value="murA"/>
    <property type="match status" value="1"/>
</dbReference>
<dbReference type="NCBIfam" id="NF006873">
    <property type="entry name" value="PRK09369.1"/>
    <property type="match status" value="1"/>
</dbReference>
<dbReference type="PANTHER" id="PTHR43783">
    <property type="entry name" value="UDP-N-ACETYLGLUCOSAMINE 1-CARBOXYVINYLTRANSFERASE"/>
    <property type="match status" value="1"/>
</dbReference>
<dbReference type="PANTHER" id="PTHR43783:SF1">
    <property type="entry name" value="UDP-N-ACETYLGLUCOSAMINE 1-CARBOXYVINYLTRANSFERASE"/>
    <property type="match status" value="1"/>
</dbReference>
<dbReference type="Pfam" id="PF00275">
    <property type="entry name" value="EPSP_synthase"/>
    <property type="match status" value="1"/>
</dbReference>
<dbReference type="SUPFAM" id="SSF55205">
    <property type="entry name" value="EPT/RTPC-like"/>
    <property type="match status" value="1"/>
</dbReference>
<reference key="1">
    <citation type="journal article" date="2011" name="J. Bacteriol.">
        <title>Comparative genomics of 28 Salmonella enterica isolates: evidence for CRISPR-mediated adaptive sublineage evolution.</title>
        <authorList>
            <person name="Fricke W.F."/>
            <person name="Mammel M.K."/>
            <person name="McDermott P.F."/>
            <person name="Tartera C."/>
            <person name="White D.G."/>
            <person name="Leclerc J.E."/>
            <person name="Ravel J."/>
            <person name="Cebula T.A."/>
        </authorList>
    </citation>
    <scope>NUCLEOTIDE SEQUENCE [LARGE SCALE GENOMIC DNA]</scope>
    <source>
        <strain>SL254</strain>
    </source>
</reference>
<name>MURA_SALNS</name>
<sequence length="419" mass="44741">MDKFRVQGPTTLQGEVTISGAKNAALPILFAALLAEEPVEIQNVPKLKDVDTSMKLLSQLGAKVERNGSVHIDASQVNVFCAPYDLVKTMRASIWALGPLVARFGQGQVSLPGGCTIGARPVDLHITGLEQLGATIKLEEGYVKASVEGRLKGAHIVMDKVSVGATVTIMCAATLAEGTTIIENAAREPEIVDTANFLVTLGAKIAGQGTDRITIEGVERLGGGVYRVLPDRIETGTFLVAAAISRGKILCRNAQPDTLDAVLAKLRDAGADIEVGEDWISLDMHGKRPKAVNVRTAPHPAFPTDMQAQFTLLNLVAEGTGFITETVFENRFMHVPELSRMGARAEIESNTVICHGVETLSGAQVMATDLRASASLVLAGCIAEGTTIVDRIYHIDRGYERIEDKLRALGANIERVKGE</sequence>
<gene>
    <name evidence="1" type="primary">murA</name>
    <name type="ordered locus">SNSL254_A3568</name>
</gene>
<keyword id="KW-0131">Cell cycle</keyword>
<keyword id="KW-0132">Cell division</keyword>
<keyword id="KW-0133">Cell shape</keyword>
<keyword id="KW-0961">Cell wall biogenesis/degradation</keyword>
<keyword id="KW-0963">Cytoplasm</keyword>
<keyword id="KW-0573">Peptidoglycan synthesis</keyword>
<keyword id="KW-0670">Pyruvate</keyword>
<keyword id="KW-0808">Transferase</keyword>
<comment type="function">
    <text evidence="1">Cell wall formation. Adds enolpyruvyl to UDP-N-acetylglucosamine.</text>
</comment>
<comment type="catalytic activity">
    <reaction evidence="1">
        <text>phosphoenolpyruvate + UDP-N-acetyl-alpha-D-glucosamine = UDP-N-acetyl-3-O-(1-carboxyvinyl)-alpha-D-glucosamine + phosphate</text>
        <dbReference type="Rhea" id="RHEA:18681"/>
        <dbReference type="ChEBI" id="CHEBI:43474"/>
        <dbReference type="ChEBI" id="CHEBI:57705"/>
        <dbReference type="ChEBI" id="CHEBI:58702"/>
        <dbReference type="ChEBI" id="CHEBI:68483"/>
        <dbReference type="EC" id="2.5.1.7"/>
    </reaction>
</comment>
<comment type="pathway">
    <text evidence="1">Cell wall biogenesis; peptidoglycan biosynthesis.</text>
</comment>
<comment type="subcellular location">
    <subcellularLocation>
        <location evidence="1">Cytoplasm</location>
    </subcellularLocation>
</comment>
<comment type="similarity">
    <text evidence="1">Belongs to the EPSP synthase family. MurA subfamily.</text>
</comment>
<protein>
    <recommendedName>
        <fullName evidence="1">UDP-N-acetylglucosamine 1-carboxyvinyltransferase</fullName>
        <ecNumber evidence="1">2.5.1.7</ecNumber>
    </recommendedName>
    <alternativeName>
        <fullName evidence="1">Enoylpyruvate transferase</fullName>
    </alternativeName>
    <alternativeName>
        <fullName evidence="1">UDP-N-acetylglucosamine enolpyruvyl transferase</fullName>
        <shortName evidence="1">EPT</shortName>
    </alternativeName>
</protein>